<proteinExistence type="predicted"/>
<keyword id="KW-0472">Membrane</keyword>
<keyword id="KW-1185">Reference proteome</keyword>
<keyword id="KW-0812">Transmembrane</keyword>
<keyword id="KW-1133">Transmembrane helix</keyword>
<sequence>MLVIVLQGLAGFLSIIAILCQKRYNKLHRSIYGLSYDLFLLDFVGNGLYLYCALHYCYSSLVREQLSQRFPLFYPLNDARSIPISSFLILKDFCVSCCCMMVLRQLYYYRSTKHIYQGISITSIIIISVFLVLGIFTYGCSISNLPLKNSGKFGVFYLEHINYLWVMANLLKCFKYVPQMSINWMGCSTVGLSSKFALISFLAESIDLLGRLVIPTNALFYEIPFNSTPFWVKLIQFVTLLVILCQVQYVYVGRKPRLPKGKL</sequence>
<organism>
    <name type="scientific">Saccharomyces cerevisiae (strain ATCC 204508 / S288c)</name>
    <name type="common">Baker's yeast</name>
    <dbReference type="NCBI Taxonomy" id="559292"/>
    <lineage>
        <taxon>Eukaryota</taxon>
        <taxon>Fungi</taxon>
        <taxon>Dikarya</taxon>
        <taxon>Ascomycota</taxon>
        <taxon>Saccharomycotina</taxon>
        <taxon>Saccharomycetes</taxon>
        <taxon>Saccharomycetales</taxon>
        <taxon>Saccharomycetaceae</taxon>
        <taxon>Saccharomyces</taxon>
    </lineage>
</organism>
<feature type="chain" id="PRO_0000202537" description="Putative uncharacterized protein YCL002C">
    <location>
        <begin position="1"/>
        <end position="263"/>
    </location>
</feature>
<feature type="transmembrane region" description="Helical" evidence="1">
    <location>
        <begin position="1"/>
        <end position="21"/>
    </location>
</feature>
<feature type="transmembrane region" description="Helical" evidence="1">
    <location>
        <begin position="38"/>
        <end position="58"/>
    </location>
</feature>
<feature type="transmembrane region" description="Helical" evidence="1">
    <location>
        <begin position="82"/>
        <end position="102"/>
    </location>
</feature>
<feature type="transmembrane region" description="Helical" evidence="1">
    <location>
        <begin position="118"/>
        <end position="138"/>
    </location>
</feature>
<feature type="transmembrane region" description="Helical" evidence="1">
    <location>
        <begin position="151"/>
        <end position="171"/>
    </location>
</feature>
<feature type="transmembrane region" description="Helical" evidence="1">
    <location>
        <begin position="196"/>
        <end position="216"/>
    </location>
</feature>
<feature type="transmembrane region" description="Helical" evidence="1">
    <location>
        <begin position="230"/>
        <end position="250"/>
    </location>
</feature>
<gene>
    <name type="ordered locus">YCL002C</name>
    <name type="ORF">YCL2C</name>
</gene>
<reference key="1">
    <citation type="journal article" date="1992" name="Nature">
        <title>The complete DNA sequence of yeast chromosome III.</title>
        <authorList>
            <person name="Oliver S.G."/>
            <person name="van der Aart Q.J.M."/>
            <person name="Agostoni-Carbone M.L."/>
            <person name="Aigle M."/>
            <person name="Alberghina L."/>
            <person name="Alexandraki D."/>
            <person name="Antoine G."/>
            <person name="Anwar R."/>
            <person name="Ballesta J.P.G."/>
            <person name="Benit P."/>
            <person name="Berben G."/>
            <person name="Bergantino E."/>
            <person name="Biteau N."/>
            <person name="Bolle P.-A."/>
            <person name="Bolotin-Fukuhara M."/>
            <person name="Brown A."/>
            <person name="Brown A.J.P."/>
            <person name="Buhler J.-M."/>
            <person name="Carcano C."/>
            <person name="Carignani G."/>
            <person name="Cederberg H."/>
            <person name="Chanet R."/>
            <person name="Contreras R."/>
            <person name="Crouzet M."/>
            <person name="Daignan-Fornier B."/>
            <person name="Defoor E."/>
            <person name="Delgado M.D."/>
            <person name="Demolder J."/>
            <person name="Doira C."/>
            <person name="Dubois E."/>
            <person name="Dujon B."/>
            <person name="Duesterhoeft A."/>
            <person name="Erdmann D."/>
            <person name="Esteban M."/>
            <person name="Fabre F."/>
            <person name="Fairhead C."/>
            <person name="Faye G."/>
            <person name="Feldmann H."/>
            <person name="Fiers W."/>
            <person name="Francingues-Gaillard M.-C."/>
            <person name="Franco L."/>
            <person name="Frontali L."/>
            <person name="Fukuhara H."/>
            <person name="Fuller L.J."/>
            <person name="Galland P."/>
            <person name="Gent M.E."/>
            <person name="Gigot D."/>
            <person name="Gilliquet V."/>
            <person name="Glansdorff N."/>
            <person name="Goffeau A."/>
            <person name="Grenson M."/>
            <person name="Grisanti P."/>
            <person name="Grivell L.A."/>
            <person name="de Haan M."/>
            <person name="Haasemann M."/>
            <person name="Hatat D."/>
            <person name="Hoenicka J."/>
            <person name="Hegemann J.H."/>
            <person name="Herbert C.J."/>
            <person name="Hilger F."/>
            <person name="Hohmann S."/>
            <person name="Hollenberg C.P."/>
            <person name="Huse K."/>
            <person name="Iborra F."/>
            <person name="Indge K.J."/>
            <person name="Isono K."/>
            <person name="Jacq C."/>
            <person name="Jacquet M."/>
            <person name="James C.M."/>
            <person name="Jauniaux J.-C."/>
            <person name="Jia Y."/>
            <person name="Jimenez A."/>
            <person name="Kelly A."/>
            <person name="Kleinhans U."/>
            <person name="Kreisl P."/>
            <person name="Lanfranchi G."/>
            <person name="Lewis C."/>
            <person name="van der Linden C.G."/>
            <person name="Lucchini G."/>
            <person name="Lutzenkirchen K."/>
            <person name="Maat M.J."/>
            <person name="Mallet L."/>
            <person name="Mannhaupt G."/>
            <person name="Martegani E."/>
            <person name="Mathieu A."/>
            <person name="Maurer C.T.C."/>
            <person name="McConnell D."/>
            <person name="McKee R.A."/>
            <person name="Messenguy F."/>
            <person name="Mewes H.-W."/>
            <person name="Molemans F."/>
            <person name="Montague M.A."/>
            <person name="Muzi Falconi M."/>
            <person name="Navas L."/>
            <person name="Newlon C.S."/>
            <person name="Noone D."/>
            <person name="Pallier C."/>
            <person name="Panzeri L."/>
            <person name="Pearson B.M."/>
            <person name="Perea J."/>
            <person name="Philippsen P."/>
            <person name="Pierard A."/>
            <person name="Planta R.J."/>
            <person name="Plevani P."/>
            <person name="Poetsch B."/>
            <person name="Pohl F.M."/>
            <person name="Purnelle B."/>
            <person name="Ramezani Rad M."/>
            <person name="Rasmussen S.W."/>
            <person name="Raynal A."/>
            <person name="Remacha M.A."/>
            <person name="Richterich P."/>
            <person name="Roberts A.B."/>
            <person name="Rodriguez F."/>
            <person name="Sanz E."/>
            <person name="Schaaff-Gerstenschlaeger I."/>
            <person name="Scherens B."/>
            <person name="Schweitzer B."/>
            <person name="Shu Y."/>
            <person name="Skala J."/>
            <person name="Slonimski P.P."/>
            <person name="Sor F."/>
            <person name="Soustelle C."/>
            <person name="Spiegelberg R."/>
            <person name="Stateva L.I."/>
            <person name="Steensma H.Y."/>
            <person name="Steiner S."/>
            <person name="Thierry A."/>
            <person name="Thireos G."/>
            <person name="Tzermia M."/>
            <person name="Urrestarazu L.A."/>
            <person name="Valle G."/>
            <person name="Vetter I."/>
            <person name="van Vliet-Reedijk J.C."/>
            <person name="Voet M."/>
            <person name="Volckaert G."/>
            <person name="Vreken P."/>
            <person name="Wang H."/>
            <person name="Warmington J.R."/>
            <person name="von Wettstein D."/>
            <person name="Wicksteed B.L."/>
            <person name="Wilson C."/>
            <person name="Wurst H."/>
            <person name="Xu G."/>
            <person name="Yoshikawa A."/>
            <person name="Zimmermann F.K."/>
            <person name="Sgouros J.G."/>
        </authorList>
    </citation>
    <scope>NUCLEOTIDE SEQUENCE [LARGE SCALE GENOMIC DNA]</scope>
    <source>
        <strain>ATCC 204508 / S288c</strain>
    </source>
</reference>
<reference key="2">
    <citation type="submission" date="2001-06" db="EMBL/GenBank/DDBJ databases">
        <authorList>
            <person name="Valles G."/>
            <person name="Volckaerts G."/>
        </authorList>
    </citation>
    <scope>SEQUENCE REVISION</scope>
</reference>
<reference key="3">
    <citation type="journal article" date="2014" name="G3 (Bethesda)">
        <title>The reference genome sequence of Saccharomyces cerevisiae: Then and now.</title>
        <authorList>
            <person name="Engel S.R."/>
            <person name="Dietrich F.S."/>
            <person name="Fisk D.G."/>
            <person name="Binkley G."/>
            <person name="Balakrishnan R."/>
            <person name="Costanzo M.C."/>
            <person name="Dwight S.S."/>
            <person name="Hitz B.C."/>
            <person name="Karra K."/>
            <person name="Nash R.S."/>
            <person name="Weng S."/>
            <person name="Wong E.D."/>
            <person name="Lloyd P."/>
            <person name="Skrzypek M.S."/>
            <person name="Miyasato S.R."/>
            <person name="Simison M."/>
            <person name="Cherry J.M."/>
        </authorList>
    </citation>
    <scope>GENOME REANNOTATION</scope>
    <scope>SEQUENCE REVISION TO 240</scope>
    <source>
        <strain>ATCC 204508 / S288c</strain>
    </source>
</reference>
<reference key="4">
    <citation type="journal article" date="2003" name="Science">
        <title>Finding functional features in Saccharomyces genomes by phylogenetic footprinting.</title>
        <authorList>
            <person name="Cliften P.F."/>
            <person name="Sudarsanam P."/>
            <person name="Desikan A."/>
            <person name="Fulton L."/>
            <person name="Fulton B."/>
            <person name="Majors J."/>
            <person name="Waterston R."/>
            <person name="Cohen B.A."/>
            <person name="Johnston M."/>
        </authorList>
    </citation>
    <scope>REVISION OF GENE MODEL</scope>
</reference>
<evidence type="ECO:0000255" key="1"/>
<evidence type="ECO:0000305" key="2"/>
<name>YCA2_YEAST</name>
<accession>P25565</accession>
<accession>D6VR08</accession>
<accession>Q8NIM4</accession>
<comment type="subcellular location">
    <subcellularLocation>
        <location evidence="2">Membrane</location>
        <topology evidence="2">Multi-pass membrane protein</topology>
    </subcellularLocation>
</comment>
<comment type="sequence caution" evidence="2">
    <conflict type="erroneous gene model prediction">
        <sequence resource="EMBL-CDS" id="CAC42967"/>
    </conflict>
</comment>
<comment type="sequence caution" evidence="2">
    <conflict type="frameshift">
        <sequence resource="EMBL-CDS" id="CAC42967"/>
    </conflict>
</comment>
<protein>
    <recommendedName>
        <fullName>Putative uncharacterized protein YCL002C</fullName>
    </recommendedName>
</protein>
<dbReference type="EMBL" id="X59720">
    <property type="protein sequence ID" value="CAC42967.1"/>
    <property type="status" value="ALT_SEQ"/>
    <property type="molecule type" value="Genomic_DNA"/>
</dbReference>
<dbReference type="EMBL" id="BK006937">
    <property type="protein sequence ID" value="DAA07477.2"/>
    <property type="molecule type" value="Genomic_DNA"/>
</dbReference>
<dbReference type="PIR" id="S19357">
    <property type="entry name" value="S19357"/>
</dbReference>
<dbReference type="RefSeq" id="NP_009924.4">
    <property type="nucleotide sequence ID" value="NM_001178652.2"/>
</dbReference>
<dbReference type="SMR" id="P25565"/>
<dbReference type="BioGRID" id="30976">
    <property type="interactions" value="94"/>
</dbReference>
<dbReference type="FunCoup" id="P25565">
    <property type="interactions" value="28"/>
</dbReference>
<dbReference type="IntAct" id="P25565">
    <property type="interactions" value="1"/>
</dbReference>
<dbReference type="STRING" id="4932.YCL002C"/>
<dbReference type="PaxDb" id="4932-YCL002C"/>
<dbReference type="PeptideAtlas" id="P25565"/>
<dbReference type="EnsemblFungi" id="YCL002C_mRNA">
    <property type="protein sequence ID" value="YCL002C"/>
    <property type="gene ID" value="YCL002C"/>
</dbReference>
<dbReference type="GeneID" id="850353"/>
<dbReference type="KEGG" id="sce:YCL002C"/>
<dbReference type="AGR" id="SGD:S000000508"/>
<dbReference type="SGD" id="S000000508">
    <property type="gene designation" value="YCL002C"/>
</dbReference>
<dbReference type="VEuPathDB" id="FungiDB:YCL002C"/>
<dbReference type="eggNOG" id="ENOG502RXGR">
    <property type="taxonomic scope" value="Eukaryota"/>
</dbReference>
<dbReference type="HOGENOM" id="CLU_095775_0_0_1"/>
<dbReference type="InParanoid" id="P25565"/>
<dbReference type="OMA" id="YQAQFLY"/>
<dbReference type="OrthoDB" id="75720at2759"/>
<dbReference type="BioCyc" id="YEAST:G3O-29276-MONOMER"/>
<dbReference type="BioGRID-ORCS" id="850353">
    <property type="hits" value="0 hits in 10 CRISPR screens"/>
</dbReference>
<dbReference type="PRO" id="PR:P25565"/>
<dbReference type="Proteomes" id="UP000002311">
    <property type="component" value="Chromosome III"/>
</dbReference>
<dbReference type="RNAct" id="P25565">
    <property type="molecule type" value="protein"/>
</dbReference>
<dbReference type="GO" id="GO:0005829">
    <property type="term" value="C:cytosol"/>
    <property type="evidence" value="ECO:0007005"/>
    <property type="project" value="SGD"/>
</dbReference>
<dbReference type="GO" id="GO:0016020">
    <property type="term" value="C:membrane"/>
    <property type="evidence" value="ECO:0007669"/>
    <property type="project" value="UniProtKB-SubCell"/>
</dbReference>
<dbReference type="GO" id="GO:0005634">
    <property type="term" value="C:nucleus"/>
    <property type="evidence" value="ECO:0007005"/>
    <property type="project" value="SGD"/>
</dbReference>